<feature type="chain" id="PRO_0000103386" description="Error-prone DNA polymerase">
    <location>
        <begin position="1"/>
        <end position="1146"/>
    </location>
</feature>
<feature type="region of interest" description="Disordered" evidence="2">
    <location>
        <begin position="1"/>
        <end position="43"/>
    </location>
</feature>
<feature type="region of interest" description="Disordered" evidence="2">
    <location>
        <begin position="154"/>
        <end position="178"/>
    </location>
</feature>
<feature type="compositionally biased region" description="Basic and acidic residues" evidence="2">
    <location>
        <begin position="12"/>
        <end position="26"/>
    </location>
</feature>
<organism>
    <name type="scientific">Nocardia farcinica (strain IFM 10152)</name>
    <dbReference type="NCBI Taxonomy" id="247156"/>
    <lineage>
        <taxon>Bacteria</taxon>
        <taxon>Bacillati</taxon>
        <taxon>Actinomycetota</taxon>
        <taxon>Actinomycetes</taxon>
        <taxon>Mycobacteriales</taxon>
        <taxon>Nocardiaceae</taxon>
        <taxon>Nocardia</taxon>
    </lineage>
</organism>
<name>DNAE2_NOCFA</name>
<sequence>MGWGTGPPSWSELERVLSGRPGRTDPEAMYPGDGGDSPAWSRKREPYLAEPIRPVDRPTVPYAELHAHSAYSFLDGASQPEELVEEAVRLGLEAIALTDHDGFYGTVRFAEAAKEWGIATVFGAELSLGVARPAPRRSARKAARGRGRAVRYAATPEFEHAAAPDSAPRTGEPDPPGPHLLVLARGQEGYRRLSREIAAAHLAAGEKGVLRYDIDALTAAAGGHWHILTGCRKGHLRTALADDLAAGETGLPRAEAALRDLVERFGADRVSVELTHHGVPADDERNALLIALADRVGLPVLATTGAHFAGPEQRRRAMALAAIRARRSLDEMAGWLAPAGGAHLRSGAEMARLFAACPDAVANAVALSRECAFDLRLIAPQLPPFAVPDGHDENSWLRELVLRGAARRYGPPHANPPAYRQLEHELEVIATLGFPGYFLVVHDIVSFCERNGILCQGRGSAANSAVCFAIGITNVDPVANELLFERFLSPERDGPPDIDIDIESDRREEAIQHVYARYGREYAAQVANVITYRGKSAVRDAAKALGFSPGQQDAWSKQVSRWTGVGAETGTDIPEQVLRLAADLEGLPRHMGIHSGGMVICDRPIADVCPVEWARMAGRSVLQWDKDDCAAVGLVKFDMLGLGMLSALHYMIDLVREHEGVEVRLHELDLKEPAVYEMLSRADSVGVFQVESRAQMATLPRLRPREFYDLVVEVALIRPGPIQGGSVHPYIRRRNGTEPVTYDHPALENSLGRTLGVPLFQEQLMQMAVDVAGFTAAEADQLRRAMGSKRSPERMRRLKERLYRGMAELHGITGEVADRIYEKLYAFANFGFPESHSQSFAALVFYSAWFKLHHPAAFCAGLLRAQPMGFYSPQSLVADARRHGVPVHGPDVNASLAEATLENGGREVRLGLAGVRHIGSELAERIVAARVEHGPYTSVLDLTGRVELTVAQAEALATAGAFDSVTGPSGAERSGGRRAALWAAGAAARERAHLLPGTGPAADAPALPGMSALELAAADVWATGISPGSYPTEFLRARMDELGVIPAGRLLEVRDGSRVLVGGAVTHRQRPATAAGVTFLNLEDETGMVNVVCSVGLWTRYRALAQSASALLVRGRVQNAEGAVSVVAEHLQLLSLGMGSRSRDFR</sequence>
<protein>
    <recommendedName>
        <fullName evidence="1">Error-prone DNA polymerase</fullName>
        <ecNumber evidence="1">2.7.7.7</ecNumber>
    </recommendedName>
</protein>
<reference key="1">
    <citation type="journal article" date="2004" name="Proc. Natl. Acad. Sci. U.S.A.">
        <title>The complete genomic sequence of Nocardia farcinica IFM 10152.</title>
        <authorList>
            <person name="Ishikawa J."/>
            <person name="Yamashita A."/>
            <person name="Mikami Y."/>
            <person name="Hoshino Y."/>
            <person name="Kurita H."/>
            <person name="Hotta K."/>
            <person name="Shiba T."/>
            <person name="Hattori M."/>
        </authorList>
    </citation>
    <scope>NUCLEOTIDE SEQUENCE [LARGE SCALE GENOMIC DNA]</scope>
    <source>
        <strain>IFM 10152</strain>
    </source>
</reference>
<gene>
    <name evidence="1" type="primary">dnaE2</name>
    <name type="ordered locus">NFA_9150</name>
</gene>
<accession>Q5Z1D1</accession>
<dbReference type="EC" id="2.7.7.7" evidence="1"/>
<dbReference type="EMBL" id="AP006618">
    <property type="protein sequence ID" value="BAD55760.1"/>
    <property type="molecule type" value="Genomic_DNA"/>
</dbReference>
<dbReference type="RefSeq" id="WP_011207445.1">
    <property type="nucleotide sequence ID" value="NC_006361.1"/>
</dbReference>
<dbReference type="SMR" id="Q5Z1D1"/>
<dbReference type="STRING" id="247156.NFA_9150"/>
<dbReference type="GeneID" id="61131740"/>
<dbReference type="KEGG" id="nfa:NFA_9150"/>
<dbReference type="eggNOG" id="COG0587">
    <property type="taxonomic scope" value="Bacteria"/>
</dbReference>
<dbReference type="HOGENOM" id="CLU_001600_4_0_11"/>
<dbReference type="OrthoDB" id="9803237at2"/>
<dbReference type="Proteomes" id="UP000006820">
    <property type="component" value="Chromosome"/>
</dbReference>
<dbReference type="GO" id="GO:0005737">
    <property type="term" value="C:cytoplasm"/>
    <property type="evidence" value="ECO:0007669"/>
    <property type="project" value="UniProtKB-SubCell"/>
</dbReference>
<dbReference type="GO" id="GO:0008408">
    <property type="term" value="F:3'-5' exonuclease activity"/>
    <property type="evidence" value="ECO:0007669"/>
    <property type="project" value="InterPro"/>
</dbReference>
<dbReference type="GO" id="GO:0003887">
    <property type="term" value="F:DNA-directed DNA polymerase activity"/>
    <property type="evidence" value="ECO:0007669"/>
    <property type="project" value="UniProtKB-UniRule"/>
</dbReference>
<dbReference type="GO" id="GO:0003676">
    <property type="term" value="F:nucleic acid binding"/>
    <property type="evidence" value="ECO:0007669"/>
    <property type="project" value="InterPro"/>
</dbReference>
<dbReference type="GO" id="GO:0006281">
    <property type="term" value="P:DNA repair"/>
    <property type="evidence" value="ECO:0007669"/>
    <property type="project" value="UniProtKB-UniRule"/>
</dbReference>
<dbReference type="GO" id="GO:0006260">
    <property type="term" value="P:DNA replication"/>
    <property type="evidence" value="ECO:0007669"/>
    <property type="project" value="UniProtKB-KW"/>
</dbReference>
<dbReference type="CDD" id="cd04485">
    <property type="entry name" value="DnaE_OBF"/>
    <property type="match status" value="1"/>
</dbReference>
<dbReference type="Gene3D" id="1.10.150.870">
    <property type="match status" value="1"/>
</dbReference>
<dbReference type="Gene3D" id="3.20.20.140">
    <property type="entry name" value="Metal-dependent hydrolases"/>
    <property type="match status" value="1"/>
</dbReference>
<dbReference type="Gene3D" id="2.40.50.140">
    <property type="entry name" value="Nucleic acid-binding proteins"/>
    <property type="match status" value="1"/>
</dbReference>
<dbReference type="HAMAP" id="MF_01902">
    <property type="entry name" value="DNApol_error_prone"/>
    <property type="match status" value="1"/>
</dbReference>
<dbReference type="InterPro" id="IPR011708">
    <property type="entry name" value="DNA_pol3_alpha_NTPase_dom"/>
</dbReference>
<dbReference type="InterPro" id="IPR040982">
    <property type="entry name" value="DNA_pol3_finger"/>
</dbReference>
<dbReference type="InterPro" id="IPR023073">
    <property type="entry name" value="DnaE2"/>
</dbReference>
<dbReference type="InterPro" id="IPR004805">
    <property type="entry name" value="DnaE2/DnaE/PolC"/>
</dbReference>
<dbReference type="InterPro" id="IPR029460">
    <property type="entry name" value="DNAPol_HHH"/>
</dbReference>
<dbReference type="InterPro" id="IPR012340">
    <property type="entry name" value="NA-bd_OB-fold"/>
</dbReference>
<dbReference type="InterPro" id="IPR004365">
    <property type="entry name" value="NA-bd_OB_tRNA"/>
</dbReference>
<dbReference type="InterPro" id="IPR004013">
    <property type="entry name" value="PHP_dom"/>
</dbReference>
<dbReference type="InterPro" id="IPR003141">
    <property type="entry name" value="Pol/His_phosphatase_N"/>
</dbReference>
<dbReference type="InterPro" id="IPR016195">
    <property type="entry name" value="Pol/histidinol_Pase-like"/>
</dbReference>
<dbReference type="NCBIfam" id="TIGR00594">
    <property type="entry name" value="polc"/>
    <property type="match status" value="1"/>
</dbReference>
<dbReference type="NCBIfam" id="NF004225">
    <property type="entry name" value="PRK05672.1"/>
    <property type="match status" value="1"/>
</dbReference>
<dbReference type="PANTHER" id="PTHR32294">
    <property type="entry name" value="DNA POLYMERASE III SUBUNIT ALPHA"/>
    <property type="match status" value="1"/>
</dbReference>
<dbReference type="PANTHER" id="PTHR32294:SF4">
    <property type="entry name" value="ERROR-PRONE DNA POLYMERASE"/>
    <property type="match status" value="1"/>
</dbReference>
<dbReference type="Pfam" id="PF07733">
    <property type="entry name" value="DNA_pol3_alpha"/>
    <property type="match status" value="1"/>
</dbReference>
<dbReference type="Pfam" id="PF17657">
    <property type="entry name" value="DNA_pol3_finger"/>
    <property type="match status" value="1"/>
</dbReference>
<dbReference type="Pfam" id="PF14579">
    <property type="entry name" value="HHH_6"/>
    <property type="match status" value="1"/>
</dbReference>
<dbReference type="Pfam" id="PF02811">
    <property type="entry name" value="PHP"/>
    <property type="match status" value="1"/>
</dbReference>
<dbReference type="Pfam" id="PF01336">
    <property type="entry name" value="tRNA_anti-codon"/>
    <property type="match status" value="1"/>
</dbReference>
<dbReference type="SMART" id="SM00481">
    <property type="entry name" value="POLIIIAc"/>
    <property type="match status" value="1"/>
</dbReference>
<dbReference type="SUPFAM" id="SSF89550">
    <property type="entry name" value="PHP domain-like"/>
    <property type="match status" value="1"/>
</dbReference>
<evidence type="ECO:0000255" key="1">
    <source>
        <dbReference type="HAMAP-Rule" id="MF_01902"/>
    </source>
</evidence>
<evidence type="ECO:0000256" key="2">
    <source>
        <dbReference type="SAM" id="MobiDB-lite"/>
    </source>
</evidence>
<proteinExistence type="inferred from homology"/>
<comment type="function">
    <text evidence="1">DNA polymerase involved in damage-induced mutagenesis and translesion synthesis (TLS). It is not the major replicative DNA polymerase.</text>
</comment>
<comment type="catalytic activity">
    <reaction evidence="1">
        <text>DNA(n) + a 2'-deoxyribonucleoside 5'-triphosphate = DNA(n+1) + diphosphate</text>
        <dbReference type="Rhea" id="RHEA:22508"/>
        <dbReference type="Rhea" id="RHEA-COMP:17339"/>
        <dbReference type="Rhea" id="RHEA-COMP:17340"/>
        <dbReference type="ChEBI" id="CHEBI:33019"/>
        <dbReference type="ChEBI" id="CHEBI:61560"/>
        <dbReference type="ChEBI" id="CHEBI:173112"/>
        <dbReference type="EC" id="2.7.7.7"/>
    </reaction>
</comment>
<comment type="subcellular location">
    <subcellularLocation>
        <location evidence="1">Cytoplasm</location>
    </subcellularLocation>
</comment>
<comment type="similarity">
    <text evidence="1">Belongs to the DNA polymerase type-C family. DnaE2 subfamily.</text>
</comment>
<keyword id="KW-0963">Cytoplasm</keyword>
<keyword id="KW-0227">DNA damage</keyword>
<keyword id="KW-0234">DNA repair</keyword>
<keyword id="KW-0235">DNA replication</keyword>
<keyword id="KW-0239">DNA-directed DNA polymerase</keyword>
<keyword id="KW-0548">Nucleotidyltransferase</keyword>
<keyword id="KW-1185">Reference proteome</keyword>
<keyword id="KW-0808">Transferase</keyword>